<name>PSBF_CROS5</name>
<proteinExistence type="inferred from homology"/>
<evidence type="ECO:0000255" key="1">
    <source>
        <dbReference type="HAMAP-Rule" id="MF_00643"/>
    </source>
</evidence>
<feature type="chain" id="PRO_1000147430" description="Cytochrome b559 subunit beta">
    <location>
        <begin position="1"/>
        <end position="44"/>
    </location>
</feature>
<feature type="transmembrane region" description="Helical" evidence="1">
    <location>
        <begin position="19"/>
        <end position="35"/>
    </location>
</feature>
<feature type="binding site" description="axial binding residue" evidence="1">
    <location>
        <position position="23"/>
    </location>
    <ligand>
        <name>heme</name>
        <dbReference type="ChEBI" id="CHEBI:30413"/>
        <note>ligand shared with alpha subunit</note>
    </ligand>
    <ligandPart>
        <name>Fe</name>
        <dbReference type="ChEBI" id="CHEBI:18248"/>
    </ligandPart>
</feature>
<reference key="1">
    <citation type="journal article" date="2008" name="Proc. Natl. Acad. Sci. U.S.A.">
        <title>The genome of Cyanothece 51142, a unicellular diazotrophic cyanobacterium important in the marine nitrogen cycle.</title>
        <authorList>
            <person name="Welsh E.A."/>
            <person name="Liberton M."/>
            <person name="Stoeckel J."/>
            <person name="Loh T."/>
            <person name="Elvitigala T."/>
            <person name="Wang C."/>
            <person name="Wollam A."/>
            <person name="Fulton R.S."/>
            <person name="Clifton S.W."/>
            <person name="Jacobs J.M."/>
            <person name="Aurora R."/>
            <person name="Ghosh B.K."/>
            <person name="Sherman L.A."/>
            <person name="Smith R.D."/>
            <person name="Wilson R.K."/>
            <person name="Pakrasi H.B."/>
        </authorList>
    </citation>
    <scope>NUCLEOTIDE SEQUENCE [LARGE SCALE GENOMIC DNA]</scope>
    <source>
        <strain>ATCC 51142 / BH68</strain>
    </source>
</reference>
<organism>
    <name type="scientific">Crocosphaera subtropica (strain ATCC 51142 / BH68)</name>
    <name type="common">Cyanothece sp. (strain ATCC 51142)</name>
    <dbReference type="NCBI Taxonomy" id="43989"/>
    <lineage>
        <taxon>Bacteria</taxon>
        <taxon>Bacillati</taxon>
        <taxon>Cyanobacteriota</taxon>
        <taxon>Cyanophyceae</taxon>
        <taxon>Oscillatoriophycideae</taxon>
        <taxon>Chroococcales</taxon>
        <taxon>Aphanothecaceae</taxon>
        <taxon>Crocosphaera</taxon>
        <taxon>Crocosphaera subtropica</taxon>
    </lineage>
</organism>
<protein>
    <recommendedName>
        <fullName evidence="1">Cytochrome b559 subunit beta</fullName>
    </recommendedName>
    <alternativeName>
        <fullName evidence="1">PSII reaction center subunit VI</fullName>
    </alternativeName>
</protein>
<accession>B1WVR8</accession>
<dbReference type="EMBL" id="CP000806">
    <property type="protein sequence ID" value="ACB50655.1"/>
    <property type="molecule type" value="Genomic_DNA"/>
</dbReference>
<dbReference type="RefSeq" id="WP_009544127.1">
    <property type="nucleotide sequence ID" value="NC_010546.1"/>
</dbReference>
<dbReference type="SMR" id="B1WVR8"/>
<dbReference type="STRING" id="43989.cce_1305"/>
<dbReference type="KEGG" id="cyt:cce_1305"/>
<dbReference type="eggNOG" id="ENOG50332KX">
    <property type="taxonomic scope" value="Bacteria"/>
</dbReference>
<dbReference type="HOGENOM" id="CLU_211753_1_0_3"/>
<dbReference type="OrthoDB" id="532613at2"/>
<dbReference type="Proteomes" id="UP000001203">
    <property type="component" value="Chromosome circular"/>
</dbReference>
<dbReference type="GO" id="GO:0009539">
    <property type="term" value="C:photosystem II reaction center"/>
    <property type="evidence" value="ECO:0007669"/>
    <property type="project" value="InterPro"/>
</dbReference>
<dbReference type="GO" id="GO:0031676">
    <property type="term" value="C:plasma membrane-derived thylakoid membrane"/>
    <property type="evidence" value="ECO:0007669"/>
    <property type="project" value="UniProtKB-SubCell"/>
</dbReference>
<dbReference type="GO" id="GO:0009055">
    <property type="term" value="F:electron transfer activity"/>
    <property type="evidence" value="ECO:0007669"/>
    <property type="project" value="UniProtKB-UniRule"/>
</dbReference>
<dbReference type="GO" id="GO:0020037">
    <property type="term" value="F:heme binding"/>
    <property type="evidence" value="ECO:0007669"/>
    <property type="project" value="InterPro"/>
</dbReference>
<dbReference type="GO" id="GO:0005506">
    <property type="term" value="F:iron ion binding"/>
    <property type="evidence" value="ECO:0007669"/>
    <property type="project" value="UniProtKB-UniRule"/>
</dbReference>
<dbReference type="GO" id="GO:0009767">
    <property type="term" value="P:photosynthetic electron transport chain"/>
    <property type="evidence" value="ECO:0007669"/>
    <property type="project" value="InterPro"/>
</dbReference>
<dbReference type="HAMAP" id="MF_00643">
    <property type="entry name" value="PSII_PsbF"/>
    <property type="match status" value="1"/>
</dbReference>
<dbReference type="InterPro" id="IPR006241">
    <property type="entry name" value="PSII_cyt_b559_bsu"/>
</dbReference>
<dbReference type="InterPro" id="IPR006216">
    <property type="entry name" value="PSII_cyt_b559_CS"/>
</dbReference>
<dbReference type="InterPro" id="IPR013081">
    <property type="entry name" value="PSII_cyt_b559_N"/>
</dbReference>
<dbReference type="NCBIfam" id="TIGR01333">
    <property type="entry name" value="cyt_b559_beta"/>
    <property type="match status" value="1"/>
</dbReference>
<dbReference type="Pfam" id="PF00283">
    <property type="entry name" value="Cytochrom_B559"/>
    <property type="match status" value="1"/>
</dbReference>
<dbReference type="PIRSF" id="PIRSF000037">
    <property type="entry name" value="PsbF"/>
    <property type="match status" value="1"/>
</dbReference>
<dbReference type="SUPFAM" id="SSF161045">
    <property type="entry name" value="Cytochrome b559 subunits"/>
    <property type="match status" value="1"/>
</dbReference>
<dbReference type="PROSITE" id="PS00537">
    <property type="entry name" value="CYTOCHROME_B559"/>
    <property type="match status" value="1"/>
</dbReference>
<keyword id="KW-0249">Electron transport</keyword>
<keyword id="KW-0349">Heme</keyword>
<keyword id="KW-0408">Iron</keyword>
<keyword id="KW-0472">Membrane</keyword>
<keyword id="KW-0479">Metal-binding</keyword>
<keyword id="KW-0602">Photosynthesis</keyword>
<keyword id="KW-0604">Photosystem II</keyword>
<keyword id="KW-1185">Reference proteome</keyword>
<keyword id="KW-0793">Thylakoid</keyword>
<keyword id="KW-0812">Transmembrane</keyword>
<keyword id="KW-1133">Transmembrane helix</keyword>
<keyword id="KW-0813">Transport</keyword>
<comment type="function">
    <text evidence="1">This b-type cytochrome is tightly associated with the reaction center of photosystem II (PSII). PSII is a light-driven water:plastoquinone oxidoreductase that uses light energy to abstract electrons from H(2)O, generating O(2) and a proton gradient subsequently used for ATP formation. It consists of a core antenna complex that captures photons, and an electron transfer chain that converts photonic excitation into a charge separation.</text>
</comment>
<comment type="cofactor">
    <cofactor evidence="1">
        <name>heme b</name>
        <dbReference type="ChEBI" id="CHEBI:60344"/>
    </cofactor>
    <text evidence="1">With its partner (PsbE) binds heme. PSII binds additional chlorophylls, carotenoids and specific lipids.</text>
</comment>
<comment type="subunit">
    <text evidence="1">Heterodimer of an alpha subunit and a beta subunit. PSII is composed of 1 copy each of membrane proteins PsbA, PsbB, PsbC, PsbD, PsbE, PsbF, PsbH, PsbI, PsbJ, PsbK, PsbL, PsbM, PsbT, PsbX, PsbY, PsbZ, Psb30/Ycf12, peripheral proteins PsbO, CyanoQ (PsbQ), PsbU, PsbV and a large number of cofactors. It forms dimeric complexes.</text>
</comment>
<comment type="subcellular location">
    <subcellularLocation>
        <location evidence="1">Cellular thylakoid membrane</location>
        <topology evidence="1">Single-pass membrane protein</topology>
    </subcellularLocation>
</comment>
<comment type="similarity">
    <text evidence="1">Belongs to the PsbE/PsbF family.</text>
</comment>
<sequence>MVNNTSNQPTSYPIFTVRWLAVHTLAVPTVFFVGAIAAMQFIQR</sequence>
<gene>
    <name evidence="1" type="primary">psbF</name>
    <name type="ordered locus">cce_1305</name>
</gene>